<feature type="chain" id="PRO_1000206516" description="Large ribosomal subunit protein bL31">
    <location>
        <begin position="1"/>
        <end position="72"/>
    </location>
</feature>
<feature type="binding site" evidence="1">
    <location>
        <position position="17"/>
    </location>
    <ligand>
        <name>Zn(2+)</name>
        <dbReference type="ChEBI" id="CHEBI:29105"/>
    </ligand>
</feature>
<feature type="binding site" evidence="1">
    <location>
        <position position="19"/>
    </location>
    <ligand>
        <name>Zn(2+)</name>
        <dbReference type="ChEBI" id="CHEBI:29105"/>
    </ligand>
</feature>
<feature type="binding site" evidence="1">
    <location>
        <position position="37"/>
    </location>
    <ligand>
        <name>Zn(2+)</name>
        <dbReference type="ChEBI" id="CHEBI:29105"/>
    </ligand>
</feature>
<feature type="binding site" evidence="1">
    <location>
        <position position="40"/>
    </location>
    <ligand>
        <name>Zn(2+)</name>
        <dbReference type="ChEBI" id="CHEBI:29105"/>
    </ligand>
</feature>
<keyword id="KW-0479">Metal-binding</keyword>
<keyword id="KW-0687">Ribonucleoprotein</keyword>
<keyword id="KW-0689">Ribosomal protein</keyword>
<keyword id="KW-0694">RNA-binding</keyword>
<keyword id="KW-0699">rRNA-binding</keyword>
<keyword id="KW-0862">Zinc</keyword>
<accession>C3KYH1</accession>
<proteinExistence type="inferred from homology"/>
<name>RL31_CLOB6</name>
<reference key="1">
    <citation type="submission" date="2008-05" db="EMBL/GenBank/DDBJ databases">
        <title>Genome sequence of Clostridium botulinum Ba4 strain 657.</title>
        <authorList>
            <person name="Shrivastava S."/>
            <person name="Brown J.L."/>
            <person name="Bruce D."/>
            <person name="Detter C."/>
            <person name="Munk C."/>
            <person name="Smith L.A."/>
            <person name="Smith T.J."/>
            <person name="Sutton G."/>
            <person name="Brettin T.S."/>
        </authorList>
    </citation>
    <scope>NUCLEOTIDE SEQUENCE [LARGE SCALE GENOMIC DNA]</scope>
    <source>
        <strain>657 / Type Ba4</strain>
    </source>
</reference>
<comment type="function">
    <text evidence="1">Binds the 23S rRNA.</text>
</comment>
<comment type="cofactor">
    <cofactor evidence="1">
        <name>Zn(2+)</name>
        <dbReference type="ChEBI" id="CHEBI:29105"/>
    </cofactor>
    <text evidence="1">Binds 1 zinc ion per subunit.</text>
</comment>
<comment type="subunit">
    <text evidence="1">Part of the 50S ribosomal subunit.</text>
</comment>
<comment type="similarity">
    <text evidence="1">Belongs to the bacterial ribosomal protein bL31 family. Type A subfamily.</text>
</comment>
<protein>
    <recommendedName>
        <fullName evidence="1">Large ribosomal subunit protein bL31</fullName>
    </recommendedName>
    <alternativeName>
        <fullName evidence="2">50S ribosomal protein L31</fullName>
    </alternativeName>
</protein>
<evidence type="ECO:0000255" key="1">
    <source>
        <dbReference type="HAMAP-Rule" id="MF_00501"/>
    </source>
</evidence>
<evidence type="ECO:0000305" key="2"/>
<sequence length="72" mass="8107">MREGIHPEYNHDVVVKCACGNTFTTGSTNKELKVEICSKCHPFFTGKQKIVDAGGRVDKFMKKFNLSNEDVK</sequence>
<gene>
    <name evidence="1" type="primary">rpmE</name>
    <name type="ordered locus">CLJ_B0173</name>
</gene>
<organism>
    <name type="scientific">Clostridium botulinum (strain 657 / Type Ba4)</name>
    <dbReference type="NCBI Taxonomy" id="515621"/>
    <lineage>
        <taxon>Bacteria</taxon>
        <taxon>Bacillati</taxon>
        <taxon>Bacillota</taxon>
        <taxon>Clostridia</taxon>
        <taxon>Eubacteriales</taxon>
        <taxon>Clostridiaceae</taxon>
        <taxon>Clostridium</taxon>
    </lineage>
</organism>
<dbReference type="EMBL" id="CP001083">
    <property type="protein sequence ID" value="ACQ52119.1"/>
    <property type="molecule type" value="Genomic_DNA"/>
</dbReference>
<dbReference type="RefSeq" id="WP_003355803.1">
    <property type="nucleotide sequence ID" value="NC_012658.1"/>
</dbReference>
<dbReference type="GeneID" id="5184390"/>
<dbReference type="KEGG" id="cbi:CLJ_B0173"/>
<dbReference type="HOGENOM" id="CLU_114306_4_3_9"/>
<dbReference type="Proteomes" id="UP000002333">
    <property type="component" value="Chromosome"/>
</dbReference>
<dbReference type="GO" id="GO:1990904">
    <property type="term" value="C:ribonucleoprotein complex"/>
    <property type="evidence" value="ECO:0007669"/>
    <property type="project" value="UniProtKB-KW"/>
</dbReference>
<dbReference type="GO" id="GO:0005840">
    <property type="term" value="C:ribosome"/>
    <property type="evidence" value="ECO:0007669"/>
    <property type="project" value="UniProtKB-KW"/>
</dbReference>
<dbReference type="GO" id="GO:0046872">
    <property type="term" value="F:metal ion binding"/>
    <property type="evidence" value="ECO:0007669"/>
    <property type="project" value="UniProtKB-KW"/>
</dbReference>
<dbReference type="GO" id="GO:0019843">
    <property type="term" value="F:rRNA binding"/>
    <property type="evidence" value="ECO:0007669"/>
    <property type="project" value="UniProtKB-KW"/>
</dbReference>
<dbReference type="GO" id="GO:0003735">
    <property type="term" value="F:structural constituent of ribosome"/>
    <property type="evidence" value="ECO:0007669"/>
    <property type="project" value="InterPro"/>
</dbReference>
<dbReference type="GO" id="GO:0006412">
    <property type="term" value="P:translation"/>
    <property type="evidence" value="ECO:0007669"/>
    <property type="project" value="UniProtKB-UniRule"/>
</dbReference>
<dbReference type="Gene3D" id="4.10.830.30">
    <property type="entry name" value="Ribosomal protein L31"/>
    <property type="match status" value="1"/>
</dbReference>
<dbReference type="HAMAP" id="MF_00501">
    <property type="entry name" value="Ribosomal_bL31_1"/>
    <property type="match status" value="1"/>
</dbReference>
<dbReference type="InterPro" id="IPR034704">
    <property type="entry name" value="Ribosomal_bL28/bL31-like_sf"/>
</dbReference>
<dbReference type="InterPro" id="IPR002150">
    <property type="entry name" value="Ribosomal_bL31"/>
</dbReference>
<dbReference type="InterPro" id="IPR027491">
    <property type="entry name" value="Ribosomal_bL31_A"/>
</dbReference>
<dbReference type="InterPro" id="IPR042105">
    <property type="entry name" value="Ribosomal_bL31_sf"/>
</dbReference>
<dbReference type="NCBIfam" id="TIGR00105">
    <property type="entry name" value="L31"/>
    <property type="match status" value="1"/>
</dbReference>
<dbReference type="NCBIfam" id="NF000612">
    <property type="entry name" value="PRK00019.1"/>
    <property type="match status" value="1"/>
</dbReference>
<dbReference type="NCBIfam" id="NF001809">
    <property type="entry name" value="PRK00528.1"/>
    <property type="match status" value="1"/>
</dbReference>
<dbReference type="PANTHER" id="PTHR33280">
    <property type="entry name" value="50S RIBOSOMAL PROTEIN L31, CHLOROPLASTIC"/>
    <property type="match status" value="1"/>
</dbReference>
<dbReference type="PANTHER" id="PTHR33280:SF1">
    <property type="entry name" value="LARGE RIBOSOMAL SUBUNIT PROTEIN BL31C"/>
    <property type="match status" value="1"/>
</dbReference>
<dbReference type="Pfam" id="PF01197">
    <property type="entry name" value="Ribosomal_L31"/>
    <property type="match status" value="1"/>
</dbReference>
<dbReference type="PRINTS" id="PR01249">
    <property type="entry name" value="RIBOSOMALL31"/>
</dbReference>
<dbReference type="SUPFAM" id="SSF143800">
    <property type="entry name" value="L28p-like"/>
    <property type="match status" value="1"/>
</dbReference>
<dbReference type="PROSITE" id="PS01143">
    <property type="entry name" value="RIBOSOMAL_L31"/>
    <property type="match status" value="1"/>
</dbReference>